<organism>
    <name type="scientific">Cereibacter sphaeroides (strain ATCC 17023 / DSM 158 / JCM 6121 / CCUG 31486 / LMG 2827 / NBRC 12203 / NCIMB 8253 / ATH 2.4.1.)</name>
    <name type="common">Rhodobacter sphaeroides</name>
    <dbReference type="NCBI Taxonomy" id="272943"/>
    <lineage>
        <taxon>Bacteria</taxon>
        <taxon>Pseudomonadati</taxon>
        <taxon>Pseudomonadota</taxon>
        <taxon>Alphaproteobacteria</taxon>
        <taxon>Rhodobacterales</taxon>
        <taxon>Paracoccaceae</taxon>
        <taxon>Cereibacter</taxon>
    </lineage>
</organism>
<protein>
    <recommendedName>
        <fullName evidence="1">Acetyl-coenzyme A carboxylase carboxyl transferase subunit alpha</fullName>
        <shortName evidence="1">ACCase subunit alpha</shortName>
        <shortName evidence="1">Acetyl-CoA carboxylase carboxyltransferase subunit alpha</shortName>
        <ecNumber evidence="1">2.1.3.15</ecNumber>
    </recommendedName>
</protein>
<evidence type="ECO:0000255" key="1">
    <source>
        <dbReference type="HAMAP-Rule" id="MF_00823"/>
    </source>
</evidence>
<evidence type="ECO:0000255" key="2">
    <source>
        <dbReference type="PROSITE-ProRule" id="PRU01137"/>
    </source>
</evidence>
<dbReference type="EC" id="2.1.3.15" evidence="1"/>
<dbReference type="EMBL" id="CP000143">
    <property type="protein sequence ID" value="ABA77920.1"/>
    <property type="molecule type" value="Genomic_DNA"/>
</dbReference>
<dbReference type="RefSeq" id="WP_002722606.1">
    <property type="nucleotide sequence ID" value="NZ_CP030271.1"/>
</dbReference>
<dbReference type="RefSeq" id="YP_351821.1">
    <property type="nucleotide sequence ID" value="NC_007493.2"/>
</dbReference>
<dbReference type="SMR" id="Q3J5L4"/>
<dbReference type="STRING" id="272943.RSP_1772"/>
<dbReference type="EnsemblBacteria" id="ABA77920">
    <property type="protein sequence ID" value="ABA77920"/>
    <property type="gene ID" value="RSP_1772"/>
</dbReference>
<dbReference type="GeneID" id="3718998"/>
<dbReference type="KEGG" id="rsp:RSP_1772"/>
<dbReference type="PATRIC" id="fig|272943.9.peg.652"/>
<dbReference type="eggNOG" id="COG0825">
    <property type="taxonomic scope" value="Bacteria"/>
</dbReference>
<dbReference type="OrthoDB" id="9808023at2"/>
<dbReference type="PhylomeDB" id="Q3J5L4"/>
<dbReference type="UniPathway" id="UPA00655">
    <property type="reaction ID" value="UER00711"/>
</dbReference>
<dbReference type="Proteomes" id="UP000002703">
    <property type="component" value="Chromosome 1"/>
</dbReference>
<dbReference type="GO" id="GO:0009317">
    <property type="term" value="C:acetyl-CoA carboxylase complex"/>
    <property type="evidence" value="ECO:0007669"/>
    <property type="project" value="InterPro"/>
</dbReference>
<dbReference type="GO" id="GO:0003989">
    <property type="term" value="F:acetyl-CoA carboxylase activity"/>
    <property type="evidence" value="ECO:0007669"/>
    <property type="project" value="InterPro"/>
</dbReference>
<dbReference type="GO" id="GO:0005524">
    <property type="term" value="F:ATP binding"/>
    <property type="evidence" value="ECO:0007669"/>
    <property type="project" value="UniProtKB-KW"/>
</dbReference>
<dbReference type="GO" id="GO:0016743">
    <property type="term" value="F:carboxyl- or carbamoyltransferase activity"/>
    <property type="evidence" value="ECO:0007669"/>
    <property type="project" value="UniProtKB-UniRule"/>
</dbReference>
<dbReference type="GO" id="GO:0006633">
    <property type="term" value="P:fatty acid biosynthetic process"/>
    <property type="evidence" value="ECO:0007669"/>
    <property type="project" value="UniProtKB-KW"/>
</dbReference>
<dbReference type="GO" id="GO:2001295">
    <property type="term" value="P:malonyl-CoA biosynthetic process"/>
    <property type="evidence" value="ECO:0007669"/>
    <property type="project" value="UniProtKB-UniRule"/>
</dbReference>
<dbReference type="Gene3D" id="3.90.226.10">
    <property type="entry name" value="2-enoyl-CoA Hydratase, Chain A, domain 1"/>
    <property type="match status" value="1"/>
</dbReference>
<dbReference type="HAMAP" id="MF_00823">
    <property type="entry name" value="AcetylCoA_CT_alpha"/>
    <property type="match status" value="1"/>
</dbReference>
<dbReference type="InterPro" id="IPR001095">
    <property type="entry name" value="Acetyl_CoA_COase_a_su"/>
</dbReference>
<dbReference type="InterPro" id="IPR029045">
    <property type="entry name" value="ClpP/crotonase-like_dom_sf"/>
</dbReference>
<dbReference type="InterPro" id="IPR011763">
    <property type="entry name" value="COA_CT_C"/>
</dbReference>
<dbReference type="NCBIfam" id="TIGR00513">
    <property type="entry name" value="accA"/>
    <property type="match status" value="1"/>
</dbReference>
<dbReference type="NCBIfam" id="NF041504">
    <property type="entry name" value="AccA_sub"/>
    <property type="match status" value="1"/>
</dbReference>
<dbReference type="NCBIfam" id="NF004344">
    <property type="entry name" value="PRK05724.1"/>
    <property type="match status" value="1"/>
</dbReference>
<dbReference type="PANTHER" id="PTHR42853">
    <property type="entry name" value="ACETYL-COENZYME A CARBOXYLASE CARBOXYL TRANSFERASE SUBUNIT ALPHA"/>
    <property type="match status" value="1"/>
</dbReference>
<dbReference type="PANTHER" id="PTHR42853:SF3">
    <property type="entry name" value="ACETYL-COENZYME A CARBOXYLASE CARBOXYL TRANSFERASE SUBUNIT ALPHA, CHLOROPLASTIC"/>
    <property type="match status" value="1"/>
</dbReference>
<dbReference type="Pfam" id="PF03255">
    <property type="entry name" value="ACCA"/>
    <property type="match status" value="1"/>
</dbReference>
<dbReference type="PRINTS" id="PR01069">
    <property type="entry name" value="ACCCTRFRASEA"/>
</dbReference>
<dbReference type="SUPFAM" id="SSF52096">
    <property type="entry name" value="ClpP/crotonase"/>
    <property type="match status" value="1"/>
</dbReference>
<dbReference type="PROSITE" id="PS50989">
    <property type="entry name" value="COA_CT_CTER"/>
    <property type="match status" value="1"/>
</dbReference>
<proteinExistence type="inferred from homology"/>
<accession>Q3J5L4</accession>
<comment type="function">
    <text evidence="1">Component of the acetyl coenzyme A carboxylase (ACC) complex. First, biotin carboxylase catalyzes the carboxylation of biotin on its carrier protein (BCCP) and then the CO(2) group is transferred by the carboxyltransferase to acetyl-CoA to form malonyl-CoA.</text>
</comment>
<comment type="catalytic activity">
    <reaction evidence="1">
        <text>N(6)-carboxybiotinyl-L-lysyl-[protein] + acetyl-CoA = N(6)-biotinyl-L-lysyl-[protein] + malonyl-CoA</text>
        <dbReference type="Rhea" id="RHEA:54728"/>
        <dbReference type="Rhea" id="RHEA-COMP:10505"/>
        <dbReference type="Rhea" id="RHEA-COMP:10506"/>
        <dbReference type="ChEBI" id="CHEBI:57288"/>
        <dbReference type="ChEBI" id="CHEBI:57384"/>
        <dbReference type="ChEBI" id="CHEBI:83144"/>
        <dbReference type="ChEBI" id="CHEBI:83145"/>
        <dbReference type="EC" id="2.1.3.15"/>
    </reaction>
</comment>
<comment type="pathway">
    <text evidence="1">Lipid metabolism; malonyl-CoA biosynthesis; malonyl-CoA from acetyl-CoA: step 1/1.</text>
</comment>
<comment type="subunit">
    <text evidence="1">Acetyl-CoA carboxylase is a heterohexamer composed of biotin carboxyl carrier protein (AccB), biotin carboxylase (AccC) and two subunits each of ACCase subunit alpha (AccA) and ACCase subunit beta (AccD).</text>
</comment>
<comment type="subcellular location">
    <subcellularLocation>
        <location evidence="1">Cytoplasm</location>
    </subcellularLocation>
</comment>
<comment type="similarity">
    <text evidence="1">Belongs to the AccA family.</text>
</comment>
<reference key="1">
    <citation type="submission" date="2005-09" db="EMBL/GenBank/DDBJ databases">
        <title>Complete sequence of chromosome 1 of Rhodobacter sphaeroides 2.4.1.</title>
        <authorList>
            <person name="Copeland A."/>
            <person name="Lucas S."/>
            <person name="Lapidus A."/>
            <person name="Barry K."/>
            <person name="Detter J.C."/>
            <person name="Glavina T."/>
            <person name="Hammon N."/>
            <person name="Israni S."/>
            <person name="Pitluck S."/>
            <person name="Richardson P."/>
            <person name="Mackenzie C."/>
            <person name="Choudhary M."/>
            <person name="Larimer F."/>
            <person name="Hauser L.J."/>
            <person name="Land M."/>
            <person name="Donohue T.J."/>
            <person name="Kaplan S."/>
        </authorList>
    </citation>
    <scope>NUCLEOTIDE SEQUENCE [LARGE SCALE GENOMIC DNA]</scope>
    <source>
        <strain>ATCC 17023 / DSM 158 / JCM 6121 / CCUG 31486 / LMG 2827 / NBRC 12203 / NCIMB 8253 / ATH 2.4.1.</strain>
    </source>
</reference>
<keyword id="KW-0067">ATP-binding</keyword>
<keyword id="KW-0963">Cytoplasm</keyword>
<keyword id="KW-0275">Fatty acid biosynthesis</keyword>
<keyword id="KW-0276">Fatty acid metabolism</keyword>
<keyword id="KW-0444">Lipid biosynthesis</keyword>
<keyword id="KW-0443">Lipid metabolism</keyword>
<keyword id="KW-0547">Nucleotide-binding</keyword>
<keyword id="KW-1185">Reference proteome</keyword>
<keyword id="KW-0808">Transferase</keyword>
<gene>
    <name evidence="1" type="primary">accA</name>
    <name type="ordered locus">RHOS4_03520</name>
    <name type="ORF">RSP_1772</name>
</gene>
<feature type="chain" id="PRO_0000223817" description="Acetyl-coenzyme A carboxylase carboxyl transferase subunit alpha">
    <location>
        <begin position="1"/>
        <end position="319"/>
    </location>
</feature>
<feature type="domain" description="CoA carboxyltransferase C-terminal" evidence="2">
    <location>
        <begin position="38"/>
        <end position="292"/>
    </location>
</feature>
<name>ACCA_CERS4</name>
<sequence length="319" mass="35370">MNYLEFEKPLSEIEGKAEELRALARGNREMDVEKEASALDKKAETLLKDLYKDLTPWRKCQVARHPDRPHCKDYIEGLFTEYTPLAGDRNFADDHAIMGGLARFNDNPVVVIGQEKGHDTKTRIERNFGMARPEGYRKAIRLMEMAHRFRLPVITLVDTPGAYPGKGAEERGQAEAIARATQKCLEIGVPLVAVVIGEGGSGGAVALATANRIAMLEHSVYSVISPEGCASILWKDAEKMREAAEALRLTAQDLHKLGVIDRIIKEPLGGAQRGRRETVDAVGKAIEMMLKELVGRKPEWLVKDRRNKFLDMGSKGLAA</sequence>